<gene>
    <name type="primary">ORMDL1</name>
    <name type="ORF">HSPC202</name>
</gene>
<sequence length="153" mass="17371">MNVGVAHSEVNPNTRVMNSRGMWLTYALGVGLLHIVLLSIPFFSVPVAWTLTNIIHNLGMYVFLHAVKGTPFETPDQGKARLLTHWEQLDYGVQFTSSRKFFTISPIILYFLASFYTKYDPTHFILNTASLLSVLIPKMPQLHGVRIFGINKY</sequence>
<evidence type="ECO:0000250" key="1">
    <source>
        <dbReference type="UniProtKB" id="Q8N138"/>
    </source>
</evidence>
<evidence type="ECO:0000255" key="2"/>
<evidence type="ECO:0000269" key="3">
    <source>
    </source>
</evidence>
<evidence type="ECO:0000269" key="4">
    <source>
    </source>
</evidence>
<evidence type="ECO:0000305" key="5"/>
<accession>Q9P0S3</accession>
<accession>B2R8W3</accession>
<accession>D3DPH9</accession>
<keyword id="KW-0256">Endoplasmic reticulum</keyword>
<keyword id="KW-0472">Membrane</keyword>
<keyword id="KW-1267">Proteomics identification</keyword>
<keyword id="KW-1185">Reference proteome</keyword>
<keyword id="KW-0812">Transmembrane</keyword>
<keyword id="KW-1133">Transmembrane helix</keyword>
<proteinExistence type="evidence at protein level"/>
<protein>
    <recommendedName>
        <fullName>ORM1-like protein 1</fullName>
    </recommendedName>
    <alternativeName>
        <fullName>Adoplin-1</fullName>
    </alternativeName>
</protein>
<name>ORML1_HUMAN</name>
<reference key="1">
    <citation type="journal article" date="2002" name="Genome Biol.">
        <title>ORMDL proteins are a conserved new family of endoplasmic reticulum membrane proteins.</title>
        <authorList>
            <person name="Hjelmqvist L."/>
            <person name="Tuson M."/>
            <person name="Marfany G."/>
            <person name="Herrero E."/>
            <person name="Balcells S."/>
            <person name="Gonzalez-Duarte R."/>
        </authorList>
    </citation>
    <scope>NUCLEOTIDE SEQUENCE [GENOMIC DNA / MRNA]</scope>
    <scope>SUBCELLULAR LOCATION</scope>
    <scope>TISSUE SPECIFICITY</scope>
    <source>
        <tissue>Retina</tissue>
    </source>
</reference>
<reference key="2">
    <citation type="journal article" date="2008" name="FASEB J.">
        <title>A family of membrane proteins associated with presenilin expression and gamma-secretase function.</title>
        <authorList>
            <person name="Araki W."/>
            <person name="Takahashi-Sasaki N."/>
            <person name="Chui D.H."/>
            <person name="Saito S."/>
            <person name="Takeda K."/>
            <person name="Shirotani K."/>
            <person name="Takahashi K."/>
            <person name="Murayama K.S."/>
            <person name="Kametani F."/>
            <person name="Shiraishi H."/>
            <person name="Komano H."/>
            <person name="Tabira T."/>
        </authorList>
    </citation>
    <scope>NUCLEOTIDE SEQUENCE [MRNA]</scope>
    <source>
        <tissue>Fetal brain</tissue>
    </source>
</reference>
<reference key="3">
    <citation type="journal article" date="2000" name="Genome Res.">
        <title>Cloning and functional analysis of cDNAs with open reading frames for 300 previously undefined genes expressed in CD34+ hematopoietic stem/progenitor cells.</title>
        <authorList>
            <person name="Zhang Q.-H."/>
            <person name="Ye M."/>
            <person name="Wu X.-Y."/>
            <person name="Ren S.-X."/>
            <person name="Zhao M."/>
            <person name="Zhao C.-J."/>
            <person name="Fu G."/>
            <person name="Shen Y."/>
            <person name="Fan H.-Y."/>
            <person name="Lu G."/>
            <person name="Zhong M."/>
            <person name="Xu X.-R."/>
            <person name="Han Z.-G."/>
            <person name="Zhang J.-W."/>
            <person name="Tao J."/>
            <person name="Huang Q.-H."/>
            <person name="Zhou J."/>
            <person name="Hu G.-X."/>
            <person name="Gu J."/>
            <person name="Chen S.-J."/>
            <person name="Chen Z."/>
        </authorList>
    </citation>
    <scope>NUCLEOTIDE SEQUENCE [LARGE SCALE MRNA]</scope>
    <source>
        <tissue>Umbilical cord blood</tissue>
    </source>
</reference>
<reference key="4">
    <citation type="journal article" date="2004" name="Nat. Genet.">
        <title>Complete sequencing and characterization of 21,243 full-length human cDNAs.</title>
        <authorList>
            <person name="Ota T."/>
            <person name="Suzuki Y."/>
            <person name="Nishikawa T."/>
            <person name="Otsuki T."/>
            <person name="Sugiyama T."/>
            <person name="Irie R."/>
            <person name="Wakamatsu A."/>
            <person name="Hayashi K."/>
            <person name="Sato H."/>
            <person name="Nagai K."/>
            <person name="Kimura K."/>
            <person name="Makita H."/>
            <person name="Sekine M."/>
            <person name="Obayashi M."/>
            <person name="Nishi T."/>
            <person name="Shibahara T."/>
            <person name="Tanaka T."/>
            <person name="Ishii S."/>
            <person name="Yamamoto J."/>
            <person name="Saito K."/>
            <person name="Kawai Y."/>
            <person name="Isono Y."/>
            <person name="Nakamura Y."/>
            <person name="Nagahari K."/>
            <person name="Murakami K."/>
            <person name="Yasuda T."/>
            <person name="Iwayanagi T."/>
            <person name="Wagatsuma M."/>
            <person name="Shiratori A."/>
            <person name="Sudo H."/>
            <person name="Hosoiri T."/>
            <person name="Kaku Y."/>
            <person name="Kodaira H."/>
            <person name="Kondo H."/>
            <person name="Sugawara M."/>
            <person name="Takahashi M."/>
            <person name="Kanda K."/>
            <person name="Yokoi T."/>
            <person name="Furuya T."/>
            <person name="Kikkawa E."/>
            <person name="Omura Y."/>
            <person name="Abe K."/>
            <person name="Kamihara K."/>
            <person name="Katsuta N."/>
            <person name="Sato K."/>
            <person name="Tanikawa M."/>
            <person name="Yamazaki M."/>
            <person name="Ninomiya K."/>
            <person name="Ishibashi T."/>
            <person name="Yamashita H."/>
            <person name="Murakawa K."/>
            <person name="Fujimori K."/>
            <person name="Tanai H."/>
            <person name="Kimata M."/>
            <person name="Watanabe M."/>
            <person name="Hiraoka S."/>
            <person name="Chiba Y."/>
            <person name="Ishida S."/>
            <person name="Ono Y."/>
            <person name="Takiguchi S."/>
            <person name="Watanabe S."/>
            <person name="Yosida M."/>
            <person name="Hotuta T."/>
            <person name="Kusano J."/>
            <person name="Kanehori K."/>
            <person name="Takahashi-Fujii A."/>
            <person name="Hara H."/>
            <person name="Tanase T.-O."/>
            <person name="Nomura Y."/>
            <person name="Togiya S."/>
            <person name="Komai F."/>
            <person name="Hara R."/>
            <person name="Takeuchi K."/>
            <person name="Arita M."/>
            <person name="Imose N."/>
            <person name="Musashino K."/>
            <person name="Yuuki H."/>
            <person name="Oshima A."/>
            <person name="Sasaki N."/>
            <person name="Aotsuka S."/>
            <person name="Yoshikawa Y."/>
            <person name="Matsunawa H."/>
            <person name="Ichihara T."/>
            <person name="Shiohata N."/>
            <person name="Sano S."/>
            <person name="Moriya S."/>
            <person name="Momiyama H."/>
            <person name="Satoh N."/>
            <person name="Takami S."/>
            <person name="Terashima Y."/>
            <person name="Suzuki O."/>
            <person name="Nakagawa S."/>
            <person name="Senoh A."/>
            <person name="Mizoguchi H."/>
            <person name="Goto Y."/>
            <person name="Shimizu F."/>
            <person name="Wakebe H."/>
            <person name="Hishigaki H."/>
            <person name="Watanabe T."/>
            <person name="Sugiyama A."/>
            <person name="Takemoto M."/>
            <person name="Kawakami B."/>
            <person name="Yamazaki M."/>
            <person name="Watanabe K."/>
            <person name="Kumagai A."/>
            <person name="Itakura S."/>
            <person name="Fukuzumi Y."/>
            <person name="Fujimori Y."/>
            <person name="Komiyama M."/>
            <person name="Tashiro H."/>
            <person name="Tanigami A."/>
            <person name="Fujiwara T."/>
            <person name="Ono T."/>
            <person name="Yamada K."/>
            <person name="Fujii Y."/>
            <person name="Ozaki K."/>
            <person name="Hirao M."/>
            <person name="Ohmori Y."/>
            <person name="Kawabata A."/>
            <person name="Hikiji T."/>
            <person name="Kobatake N."/>
            <person name="Inagaki H."/>
            <person name="Ikema Y."/>
            <person name="Okamoto S."/>
            <person name="Okitani R."/>
            <person name="Kawakami T."/>
            <person name="Noguchi S."/>
            <person name="Itoh T."/>
            <person name="Shigeta K."/>
            <person name="Senba T."/>
            <person name="Matsumura K."/>
            <person name="Nakajima Y."/>
            <person name="Mizuno T."/>
            <person name="Morinaga M."/>
            <person name="Sasaki M."/>
            <person name="Togashi T."/>
            <person name="Oyama M."/>
            <person name="Hata H."/>
            <person name="Watanabe M."/>
            <person name="Komatsu T."/>
            <person name="Mizushima-Sugano J."/>
            <person name="Satoh T."/>
            <person name="Shirai Y."/>
            <person name="Takahashi Y."/>
            <person name="Nakagawa K."/>
            <person name="Okumura K."/>
            <person name="Nagase T."/>
            <person name="Nomura N."/>
            <person name="Kikuchi H."/>
            <person name="Masuho Y."/>
            <person name="Yamashita R."/>
            <person name="Nakai K."/>
            <person name="Yada T."/>
            <person name="Nakamura Y."/>
            <person name="Ohara O."/>
            <person name="Isogai T."/>
            <person name="Sugano S."/>
        </authorList>
    </citation>
    <scope>NUCLEOTIDE SEQUENCE [LARGE SCALE MRNA]</scope>
    <source>
        <tissue>Placenta</tissue>
    </source>
</reference>
<reference key="5">
    <citation type="journal article" date="2007" name="BMC Genomics">
        <title>The full-ORF clone resource of the German cDNA consortium.</title>
        <authorList>
            <person name="Bechtel S."/>
            <person name="Rosenfelder H."/>
            <person name="Duda A."/>
            <person name="Schmidt C.P."/>
            <person name="Ernst U."/>
            <person name="Wellenreuther R."/>
            <person name="Mehrle A."/>
            <person name="Schuster C."/>
            <person name="Bahr A."/>
            <person name="Bloecker H."/>
            <person name="Heubner D."/>
            <person name="Hoerlein A."/>
            <person name="Michel G."/>
            <person name="Wedler H."/>
            <person name="Koehrer K."/>
            <person name="Ottenwaelder B."/>
            <person name="Poustka A."/>
            <person name="Wiemann S."/>
            <person name="Schupp I."/>
        </authorList>
    </citation>
    <scope>NUCLEOTIDE SEQUENCE [LARGE SCALE MRNA]</scope>
    <source>
        <tissue>Cervix</tissue>
    </source>
</reference>
<reference key="6">
    <citation type="journal article" date="2005" name="Nature">
        <title>Generation and annotation of the DNA sequences of human chromosomes 2 and 4.</title>
        <authorList>
            <person name="Hillier L.W."/>
            <person name="Graves T.A."/>
            <person name="Fulton R.S."/>
            <person name="Fulton L.A."/>
            <person name="Pepin K.H."/>
            <person name="Minx P."/>
            <person name="Wagner-McPherson C."/>
            <person name="Layman D."/>
            <person name="Wylie K."/>
            <person name="Sekhon M."/>
            <person name="Becker M.C."/>
            <person name="Fewell G.A."/>
            <person name="Delehaunty K.D."/>
            <person name="Miner T.L."/>
            <person name="Nash W.E."/>
            <person name="Kremitzki C."/>
            <person name="Oddy L."/>
            <person name="Du H."/>
            <person name="Sun H."/>
            <person name="Bradshaw-Cordum H."/>
            <person name="Ali J."/>
            <person name="Carter J."/>
            <person name="Cordes M."/>
            <person name="Harris A."/>
            <person name="Isak A."/>
            <person name="van Brunt A."/>
            <person name="Nguyen C."/>
            <person name="Du F."/>
            <person name="Courtney L."/>
            <person name="Kalicki J."/>
            <person name="Ozersky P."/>
            <person name="Abbott S."/>
            <person name="Armstrong J."/>
            <person name="Belter E.A."/>
            <person name="Caruso L."/>
            <person name="Cedroni M."/>
            <person name="Cotton M."/>
            <person name="Davidson T."/>
            <person name="Desai A."/>
            <person name="Elliott G."/>
            <person name="Erb T."/>
            <person name="Fronick C."/>
            <person name="Gaige T."/>
            <person name="Haakenson W."/>
            <person name="Haglund K."/>
            <person name="Holmes A."/>
            <person name="Harkins R."/>
            <person name="Kim K."/>
            <person name="Kruchowski S.S."/>
            <person name="Strong C.M."/>
            <person name="Grewal N."/>
            <person name="Goyea E."/>
            <person name="Hou S."/>
            <person name="Levy A."/>
            <person name="Martinka S."/>
            <person name="Mead K."/>
            <person name="McLellan M.D."/>
            <person name="Meyer R."/>
            <person name="Randall-Maher J."/>
            <person name="Tomlinson C."/>
            <person name="Dauphin-Kohlberg S."/>
            <person name="Kozlowicz-Reilly A."/>
            <person name="Shah N."/>
            <person name="Swearengen-Shahid S."/>
            <person name="Snider J."/>
            <person name="Strong J.T."/>
            <person name="Thompson J."/>
            <person name="Yoakum M."/>
            <person name="Leonard S."/>
            <person name="Pearman C."/>
            <person name="Trani L."/>
            <person name="Radionenko M."/>
            <person name="Waligorski J.E."/>
            <person name="Wang C."/>
            <person name="Rock S.M."/>
            <person name="Tin-Wollam A.-M."/>
            <person name="Maupin R."/>
            <person name="Latreille P."/>
            <person name="Wendl M.C."/>
            <person name="Yang S.-P."/>
            <person name="Pohl C."/>
            <person name="Wallis J.W."/>
            <person name="Spieth J."/>
            <person name="Bieri T.A."/>
            <person name="Berkowicz N."/>
            <person name="Nelson J.O."/>
            <person name="Osborne J."/>
            <person name="Ding L."/>
            <person name="Meyer R."/>
            <person name="Sabo A."/>
            <person name="Shotland Y."/>
            <person name="Sinha P."/>
            <person name="Wohldmann P.E."/>
            <person name="Cook L.L."/>
            <person name="Hickenbotham M.T."/>
            <person name="Eldred J."/>
            <person name="Williams D."/>
            <person name="Jones T.A."/>
            <person name="She X."/>
            <person name="Ciccarelli F.D."/>
            <person name="Izaurralde E."/>
            <person name="Taylor J."/>
            <person name="Schmutz J."/>
            <person name="Myers R.M."/>
            <person name="Cox D.R."/>
            <person name="Huang X."/>
            <person name="McPherson J.D."/>
            <person name="Mardis E.R."/>
            <person name="Clifton S.W."/>
            <person name="Warren W.C."/>
            <person name="Chinwalla A.T."/>
            <person name="Eddy S.R."/>
            <person name="Marra M.A."/>
            <person name="Ovcharenko I."/>
            <person name="Furey T.S."/>
            <person name="Miller W."/>
            <person name="Eichler E.E."/>
            <person name="Bork P."/>
            <person name="Suyama M."/>
            <person name="Torrents D."/>
            <person name="Waterston R.H."/>
            <person name="Wilson R.K."/>
        </authorList>
    </citation>
    <scope>NUCLEOTIDE SEQUENCE [LARGE SCALE GENOMIC DNA]</scope>
</reference>
<reference key="7">
    <citation type="submission" date="2005-09" db="EMBL/GenBank/DDBJ databases">
        <authorList>
            <person name="Mural R.J."/>
            <person name="Istrail S."/>
            <person name="Sutton G.G."/>
            <person name="Florea L."/>
            <person name="Halpern A.L."/>
            <person name="Mobarry C.M."/>
            <person name="Lippert R."/>
            <person name="Walenz B."/>
            <person name="Shatkay H."/>
            <person name="Dew I."/>
            <person name="Miller J.R."/>
            <person name="Flanigan M.J."/>
            <person name="Edwards N.J."/>
            <person name="Bolanos R."/>
            <person name="Fasulo D."/>
            <person name="Halldorsson B.V."/>
            <person name="Hannenhalli S."/>
            <person name="Turner R."/>
            <person name="Yooseph S."/>
            <person name="Lu F."/>
            <person name="Nusskern D.R."/>
            <person name="Shue B.C."/>
            <person name="Zheng X.H."/>
            <person name="Zhong F."/>
            <person name="Delcher A.L."/>
            <person name="Huson D.H."/>
            <person name="Kravitz S.A."/>
            <person name="Mouchard L."/>
            <person name="Reinert K."/>
            <person name="Remington K.A."/>
            <person name="Clark A.G."/>
            <person name="Waterman M.S."/>
            <person name="Eichler E.E."/>
            <person name="Adams M.D."/>
            <person name="Hunkapiller M.W."/>
            <person name="Myers E.W."/>
            <person name="Venter J.C."/>
        </authorList>
    </citation>
    <scope>NUCLEOTIDE SEQUENCE [LARGE SCALE GENOMIC DNA]</scope>
</reference>
<reference key="8">
    <citation type="journal article" date="2004" name="Genome Res.">
        <title>The status, quality, and expansion of the NIH full-length cDNA project: the Mammalian Gene Collection (MGC).</title>
        <authorList>
            <consortium name="The MGC Project Team"/>
        </authorList>
    </citation>
    <scope>NUCLEOTIDE SEQUENCE [LARGE SCALE MRNA]</scope>
    <source>
        <tissue>Brain</tissue>
    </source>
</reference>
<reference key="9">
    <citation type="journal article" date="2010" name="Nature">
        <title>Orm family proteins mediate sphingolipid homeostasis.</title>
        <authorList>
            <person name="Breslow D.K."/>
            <person name="Collins S.R."/>
            <person name="Bodenmiller B."/>
            <person name="Aebersold R."/>
            <person name="Simons K."/>
            <person name="Shevchenko A."/>
            <person name="Ejsing C.S."/>
            <person name="Weissman J.S."/>
        </authorList>
    </citation>
    <scope>FUNCTION</scope>
    <scope>IDENTIFICATION IN THE SPT COMPLEX</scope>
</reference>
<reference key="10">
    <citation type="journal article" date="2015" name="Proteomics">
        <title>N-terminome analysis of the human mitochondrial proteome.</title>
        <authorList>
            <person name="Vaca Jacome A.S."/>
            <person name="Rabilloud T."/>
            <person name="Schaeffer-Reiss C."/>
            <person name="Rompais M."/>
            <person name="Ayoub D."/>
            <person name="Lane L."/>
            <person name="Bairoch A."/>
            <person name="Van Dorsselaer A."/>
            <person name="Carapito C."/>
        </authorList>
    </citation>
    <scope>IDENTIFICATION BY MASS SPECTROMETRY [LARGE SCALE ANALYSIS]</scope>
</reference>
<dbReference type="EMBL" id="AF395702">
    <property type="protein sequence ID" value="AAM43502.1"/>
    <property type="molecule type" value="Genomic_DNA"/>
</dbReference>
<dbReference type="EMBL" id="AF395701">
    <property type="protein sequence ID" value="AAM43502.1"/>
    <property type="status" value="JOINED"/>
    <property type="molecule type" value="Genomic_DNA"/>
</dbReference>
<dbReference type="EMBL" id="AF395704">
    <property type="protein sequence ID" value="AAM43503.1"/>
    <property type="molecule type" value="mRNA"/>
</dbReference>
<dbReference type="EMBL" id="AB064959">
    <property type="protein sequence ID" value="BAC11710.1"/>
    <property type="molecule type" value="mRNA"/>
</dbReference>
<dbReference type="EMBL" id="AB064960">
    <property type="protein sequence ID" value="BAC11711.1"/>
    <property type="molecule type" value="mRNA"/>
</dbReference>
<dbReference type="EMBL" id="AF151036">
    <property type="protein sequence ID" value="AAF36122.1"/>
    <property type="molecule type" value="mRNA"/>
</dbReference>
<dbReference type="EMBL" id="AK074756">
    <property type="protein sequence ID" value="BAC11184.1"/>
    <property type="molecule type" value="mRNA"/>
</dbReference>
<dbReference type="EMBL" id="AK075160">
    <property type="protein sequence ID" value="BAC11441.1"/>
    <property type="molecule type" value="mRNA"/>
</dbReference>
<dbReference type="EMBL" id="AK313533">
    <property type="protein sequence ID" value="BAG36310.1"/>
    <property type="molecule type" value="mRNA"/>
</dbReference>
<dbReference type="EMBL" id="CR936635">
    <property type="protein sequence ID" value="CAI56776.1"/>
    <property type="molecule type" value="mRNA"/>
</dbReference>
<dbReference type="EMBL" id="AC013468">
    <property type="protein sequence ID" value="AAY14772.1"/>
    <property type="molecule type" value="Genomic_DNA"/>
</dbReference>
<dbReference type="EMBL" id="CH471058">
    <property type="protein sequence ID" value="EAX10887.1"/>
    <property type="molecule type" value="Genomic_DNA"/>
</dbReference>
<dbReference type="EMBL" id="CH471058">
    <property type="protein sequence ID" value="EAX10888.1"/>
    <property type="molecule type" value="Genomic_DNA"/>
</dbReference>
<dbReference type="EMBL" id="CH471058">
    <property type="protein sequence ID" value="EAX10889.1"/>
    <property type="molecule type" value="Genomic_DNA"/>
</dbReference>
<dbReference type="EMBL" id="BC005200">
    <property type="protein sequence ID" value="AAH05200.1"/>
    <property type="molecule type" value="mRNA"/>
</dbReference>
<dbReference type="CCDS" id="CCDS2301.1"/>
<dbReference type="RefSeq" id="NP_001121622.1">
    <property type="nucleotide sequence ID" value="NM_001128150.2"/>
</dbReference>
<dbReference type="RefSeq" id="NP_057551.1">
    <property type="nucleotide sequence ID" value="NM_016467.5"/>
</dbReference>
<dbReference type="RefSeq" id="XP_005247027.1">
    <property type="nucleotide sequence ID" value="XM_005246970.4"/>
</dbReference>
<dbReference type="RefSeq" id="XP_016860836.1">
    <property type="nucleotide sequence ID" value="XM_017005347.2"/>
</dbReference>
<dbReference type="RefSeq" id="XP_047302381.1">
    <property type="nucleotide sequence ID" value="XM_047446425.1"/>
</dbReference>
<dbReference type="RefSeq" id="XP_054200607.1">
    <property type="nucleotide sequence ID" value="XM_054344632.1"/>
</dbReference>
<dbReference type="RefSeq" id="XP_054200608.1">
    <property type="nucleotide sequence ID" value="XM_054344633.1"/>
</dbReference>
<dbReference type="SMR" id="Q9P0S3"/>
<dbReference type="BioGRID" id="125113">
    <property type="interactions" value="72"/>
</dbReference>
<dbReference type="FunCoup" id="Q9P0S3">
    <property type="interactions" value="1690"/>
</dbReference>
<dbReference type="IntAct" id="Q9P0S3">
    <property type="interactions" value="58"/>
</dbReference>
<dbReference type="MINT" id="Q9P0S3"/>
<dbReference type="STRING" id="9606.ENSP00000326869"/>
<dbReference type="iPTMnet" id="Q9P0S3"/>
<dbReference type="MetOSite" id="Q9P0S3"/>
<dbReference type="PhosphoSitePlus" id="Q9P0S3"/>
<dbReference type="BioMuta" id="ORMDL1"/>
<dbReference type="DMDM" id="74734798"/>
<dbReference type="jPOST" id="Q9P0S3"/>
<dbReference type="MassIVE" id="Q9P0S3"/>
<dbReference type="PaxDb" id="9606-ENSP00000326869"/>
<dbReference type="PeptideAtlas" id="Q9P0S3"/>
<dbReference type="ProteomicsDB" id="83593"/>
<dbReference type="Pumba" id="Q9P0S3"/>
<dbReference type="TopDownProteomics" id="Q9P0S3"/>
<dbReference type="Antibodypedia" id="56292">
    <property type="antibodies" value="63 antibodies from 22 providers"/>
</dbReference>
<dbReference type="DNASU" id="94101"/>
<dbReference type="Ensembl" id="ENST00000325795.7">
    <property type="protein sequence ID" value="ENSP00000326869.3"/>
    <property type="gene ID" value="ENSG00000128699.15"/>
</dbReference>
<dbReference type="Ensembl" id="ENST00000392349.9">
    <property type="protein sequence ID" value="ENSP00000376160.4"/>
    <property type="gene ID" value="ENSG00000128699.15"/>
</dbReference>
<dbReference type="Ensembl" id="ENST00000392350.7">
    <property type="protein sequence ID" value="ENSP00000376161.3"/>
    <property type="gene ID" value="ENSG00000128699.15"/>
</dbReference>
<dbReference type="GeneID" id="94101"/>
<dbReference type="KEGG" id="hsa:94101"/>
<dbReference type="MANE-Select" id="ENST00000392349.9">
    <property type="protein sequence ID" value="ENSP00000376160.4"/>
    <property type="RefSeq nucleotide sequence ID" value="NM_016467.5"/>
    <property type="RefSeq protein sequence ID" value="NP_057551.1"/>
</dbReference>
<dbReference type="UCSC" id="uc002urb.5">
    <property type="organism name" value="human"/>
</dbReference>
<dbReference type="AGR" id="HGNC:16036"/>
<dbReference type="CTD" id="94101"/>
<dbReference type="DisGeNET" id="94101"/>
<dbReference type="GeneCards" id="ORMDL1"/>
<dbReference type="HGNC" id="HGNC:16036">
    <property type="gene designation" value="ORMDL1"/>
</dbReference>
<dbReference type="HPA" id="ENSG00000128699">
    <property type="expression patterns" value="Low tissue specificity"/>
</dbReference>
<dbReference type="MIM" id="610073">
    <property type="type" value="gene"/>
</dbReference>
<dbReference type="neXtProt" id="NX_Q9P0S3"/>
<dbReference type="OpenTargets" id="ENSG00000128699"/>
<dbReference type="PharmGKB" id="PA32819"/>
<dbReference type="VEuPathDB" id="HostDB:ENSG00000128699"/>
<dbReference type="eggNOG" id="KOG3319">
    <property type="taxonomic scope" value="Eukaryota"/>
</dbReference>
<dbReference type="GeneTree" id="ENSGT00950000183178"/>
<dbReference type="InParanoid" id="Q9P0S3"/>
<dbReference type="OMA" id="IVSAFRC"/>
<dbReference type="OrthoDB" id="1932233at2759"/>
<dbReference type="PAN-GO" id="Q9P0S3">
    <property type="GO annotations" value="4 GO annotations based on evolutionary models"/>
</dbReference>
<dbReference type="PhylomeDB" id="Q9P0S3"/>
<dbReference type="TreeFam" id="TF323369"/>
<dbReference type="PathwayCommons" id="Q9P0S3"/>
<dbReference type="Reactome" id="R-HSA-1660661">
    <property type="pathway name" value="Sphingolipid de novo biosynthesis"/>
</dbReference>
<dbReference type="SignaLink" id="Q9P0S3"/>
<dbReference type="BioGRID-ORCS" id="94101">
    <property type="hits" value="15 hits in 1169 CRISPR screens"/>
</dbReference>
<dbReference type="ChiTaRS" id="ORMDL1">
    <property type="organism name" value="human"/>
</dbReference>
<dbReference type="GenomeRNAi" id="94101"/>
<dbReference type="Pharos" id="Q9P0S3">
    <property type="development level" value="Tbio"/>
</dbReference>
<dbReference type="PRO" id="PR:Q9P0S3"/>
<dbReference type="Proteomes" id="UP000005640">
    <property type="component" value="Chromosome 2"/>
</dbReference>
<dbReference type="RNAct" id="Q9P0S3">
    <property type="molecule type" value="protein"/>
</dbReference>
<dbReference type="Bgee" id="ENSG00000128699">
    <property type="expression patterns" value="Expressed in body of pancreas and 180 other cell types or tissues"/>
</dbReference>
<dbReference type="ExpressionAtlas" id="Q9P0S3">
    <property type="expression patterns" value="baseline and differential"/>
</dbReference>
<dbReference type="GO" id="GO:0005783">
    <property type="term" value="C:endoplasmic reticulum"/>
    <property type="evidence" value="ECO:0000314"/>
    <property type="project" value="HPA"/>
</dbReference>
<dbReference type="GO" id="GO:0005789">
    <property type="term" value="C:endoplasmic reticulum membrane"/>
    <property type="evidence" value="ECO:0000314"/>
    <property type="project" value="UniProtKB"/>
</dbReference>
<dbReference type="GO" id="GO:0017059">
    <property type="term" value="C:serine palmitoyltransferase complex"/>
    <property type="evidence" value="ECO:0000318"/>
    <property type="project" value="GO_Central"/>
</dbReference>
<dbReference type="GO" id="GO:0006672">
    <property type="term" value="P:ceramide metabolic process"/>
    <property type="evidence" value="ECO:0000315"/>
    <property type="project" value="UniProtKB"/>
</dbReference>
<dbReference type="GO" id="GO:0090156">
    <property type="term" value="P:intracellular sphingolipid homeostasis"/>
    <property type="evidence" value="ECO:0000318"/>
    <property type="project" value="GO_Central"/>
</dbReference>
<dbReference type="GO" id="GO:0061744">
    <property type="term" value="P:motor behavior"/>
    <property type="evidence" value="ECO:0007669"/>
    <property type="project" value="Ensembl"/>
</dbReference>
<dbReference type="GO" id="GO:0042552">
    <property type="term" value="P:myelination"/>
    <property type="evidence" value="ECO:0007669"/>
    <property type="project" value="Ensembl"/>
</dbReference>
<dbReference type="GO" id="GO:1900060">
    <property type="term" value="P:negative regulation of ceramide biosynthetic process"/>
    <property type="evidence" value="ECO:0000315"/>
    <property type="project" value="MGI"/>
</dbReference>
<dbReference type="GO" id="GO:0030148">
    <property type="term" value="P:sphingolipid biosynthetic process"/>
    <property type="evidence" value="ECO:0000318"/>
    <property type="project" value="GO_Central"/>
</dbReference>
<dbReference type="GO" id="GO:0006686">
    <property type="term" value="P:sphingomyelin biosynthetic process"/>
    <property type="evidence" value="ECO:0007669"/>
    <property type="project" value="Ensembl"/>
</dbReference>
<dbReference type="InterPro" id="IPR007203">
    <property type="entry name" value="ORMDL"/>
</dbReference>
<dbReference type="PANTHER" id="PTHR12665">
    <property type="entry name" value="ORMDL PROTEINS"/>
    <property type="match status" value="1"/>
</dbReference>
<dbReference type="Pfam" id="PF04061">
    <property type="entry name" value="ORMDL"/>
    <property type="match status" value="1"/>
</dbReference>
<dbReference type="PIRSF" id="PIRSF018147">
    <property type="entry name" value="ORMDL"/>
    <property type="match status" value="1"/>
</dbReference>
<feature type="chain" id="PRO_0000215630" description="ORM1-like protein 1">
    <location>
        <begin position="1"/>
        <end position="153"/>
    </location>
</feature>
<feature type="topological domain" description="Cytoplasmic" evidence="2">
    <location>
        <begin position="1"/>
        <end position="26"/>
    </location>
</feature>
<feature type="transmembrane region" description="Helical" evidence="2">
    <location>
        <begin position="27"/>
        <end position="46"/>
    </location>
</feature>
<feature type="transmembrane region" description="Helical" evidence="2">
    <location>
        <begin position="47"/>
        <end position="64"/>
    </location>
</feature>
<feature type="topological domain" description="Cytoplasmic" evidence="2">
    <location>
        <begin position="65"/>
        <end position="100"/>
    </location>
</feature>
<feature type="transmembrane region" description="Helical" evidence="2">
    <location>
        <begin position="101"/>
        <end position="121"/>
    </location>
</feature>
<feature type="topological domain" description="Extracellular" evidence="2">
    <location>
        <begin position="122"/>
        <end position="123"/>
    </location>
</feature>
<feature type="transmembrane region" description="Helical" evidence="2">
    <location>
        <begin position="124"/>
        <end position="140"/>
    </location>
</feature>
<feature type="topological domain" description="Cytoplasmic" evidence="2">
    <location>
        <begin position="141"/>
        <end position="153"/>
    </location>
</feature>
<organism>
    <name type="scientific">Homo sapiens</name>
    <name type="common">Human</name>
    <dbReference type="NCBI Taxonomy" id="9606"/>
    <lineage>
        <taxon>Eukaryota</taxon>
        <taxon>Metazoa</taxon>
        <taxon>Chordata</taxon>
        <taxon>Craniata</taxon>
        <taxon>Vertebrata</taxon>
        <taxon>Euteleostomi</taxon>
        <taxon>Mammalia</taxon>
        <taxon>Eutheria</taxon>
        <taxon>Euarchontoglires</taxon>
        <taxon>Primates</taxon>
        <taxon>Haplorrhini</taxon>
        <taxon>Catarrhini</taxon>
        <taxon>Hominidae</taxon>
        <taxon>Homo</taxon>
    </lineage>
</organism>
<comment type="function">
    <text evidence="1 4">Plays an essential role in the homeostatic regulation of sphingolipid de novo biosynthesis by modulating the activity of the serine palmitoyltransferase (SPT) in response to ceramide levels (PubMed:20182505). When complexed to SPT, the binding of ceramides to its N-terminus stabilizes a conformation that block SPT substrate entry, hence preventing SPT catalytic activity. Through this mechanism, maintains ceramide levels at sufficient concentrations for the production of complex sphingolipids, but which prevents the accumulation of ceramides to levels that trigger apoptosis (By similarity).</text>
</comment>
<comment type="subunit">
    <text evidence="4">Ceramide-sensitive subunit of the serine palmitoyltransferase (SPT) complex, which is also composed of SPTLC1, SPTLC2/3 and SPTSSA/B.</text>
</comment>
<comment type="interaction">
    <interactant intactId="EBI-1054848">
        <id>Q9P0S3</id>
    </interactant>
    <interactant intactId="EBI-13059134">
        <id>Q13520</id>
        <label>AQP6</label>
    </interactant>
    <organismsDiffer>false</organismsDiffer>
    <experiments>3</experiments>
</comment>
<comment type="interaction">
    <interactant intactId="EBI-1054848">
        <id>Q9P0S3</id>
    </interactant>
    <interactant intactId="EBI-11343438">
        <id>Q3SXY8</id>
        <label>ARL13B</label>
    </interactant>
    <organismsDiffer>false</organismsDiffer>
    <experiments>3</experiments>
</comment>
<comment type="interaction">
    <interactant intactId="EBI-1054848">
        <id>Q9P0S3</id>
    </interactant>
    <interactant intactId="EBI-12808270">
        <id>P07307-3</id>
        <label>ASGR2</label>
    </interactant>
    <organismsDiffer>false</organismsDiffer>
    <experiments>3</experiments>
</comment>
<comment type="interaction">
    <interactant intactId="EBI-1054848">
        <id>Q9P0S3</id>
    </interactant>
    <interactant intactId="EBI-724524">
        <id>O75208</id>
        <label>COQ9</label>
    </interactant>
    <organismsDiffer>false</organismsDiffer>
    <experiments>3</experiments>
</comment>
<comment type="interaction">
    <interactant intactId="EBI-1054848">
        <id>Q9P0S3</id>
    </interactant>
    <interactant intactId="EBI-18013275">
        <id>Q7Z7G2</id>
        <label>CPLX4</label>
    </interactant>
    <organismsDiffer>false</organismsDiffer>
    <experiments>3</experiments>
</comment>
<comment type="interaction">
    <interactant intactId="EBI-1054848">
        <id>Q9P0S3</id>
    </interactant>
    <interactant intactId="EBI-6942903">
        <id>Q96BA8</id>
        <label>CREB3L1</label>
    </interactant>
    <organismsDiffer>false</organismsDiffer>
    <experiments>3</experiments>
</comment>
<comment type="interaction">
    <interactant intactId="EBI-1054848">
        <id>Q9P0S3</id>
    </interactant>
    <interactant intactId="EBI-8787095">
        <id>O00559</id>
        <label>EBAG9</label>
    </interactant>
    <organismsDiffer>false</organismsDiffer>
    <experiments>3</experiments>
</comment>
<comment type="interaction">
    <interactant intactId="EBI-1054848">
        <id>Q9P0S3</id>
    </interactant>
    <interactant intactId="EBI-3915253">
        <id>Q15125</id>
        <label>EBP</label>
    </interactant>
    <organismsDiffer>false</organismsDiffer>
    <experiments>3</experiments>
</comment>
<comment type="interaction">
    <interactant intactId="EBI-1054848">
        <id>Q9P0S3</id>
    </interactant>
    <interactant intactId="EBI-2339219">
        <id>Q08426</id>
        <label>EHHADH</label>
    </interactant>
    <organismsDiffer>false</organismsDiffer>
    <experiments>3</experiments>
</comment>
<comment type="interaction">
    <interactant intactId="EBI-1054848">
        <id>Q9P0S3</id>
    </interactant>
    <interactant intactId="EBI-781551">
        <id>Q9Y282</id>
        <label>ERGIC3</label>
    </interactant>
    <organismsDiffer>false</organismsDiffer>
    <experiments>3</experiments>
</comment>
<comment type="interaction">
    <interactant intactId="EBI-1054848">
        <id>Q9P0S3</id>
    </interactant>
    <interactant intactId="EBI-13345167">
        <id>Q8TDT2</id>
        <label>GPR152</label>
    </interactant>
    <organismsDiffer>false</organismsDiffer>
    <experiments>3</experiments>
</comment>
<comment type="interaction">
    <interactant intactId="EBI-1054848">
        <id>Q9P0S3</id>
    </interactant>
    <interactant intactId="EBI-1052304">
        <id>Q8NBQ5</id>
        <label>HSD17B11</label>
    </interactant>
    <organismsDiffer>false</organismsDiffer>
    <experiments>3</experiments>
</comment>
<comment type="interaction">
    <interactant intactId="EBI-1054848">
        <id>Q9P0S3</id>
    </interactant>
    <interactant intactId="EBI-15965944">
        <id>Q9NYG8-2</id>
        <label>KCNK4</label>
    </interactant>
    <organismsDiffer>false</organismsDiffer>
    <experiments>3</experiments>
</comment>
<comment type="interaction">
    <interactant intactId="EBI-1054848">
        <id>Q9P0S3</id>
    </interactant>
    <interactant intactId="EBI-750776">
        <id>O95214</id>
        <label>LEPROTL1</label>
    </interactant>
    <organismsDiffer>false</organismsDiffer>
    <experiments>3</experiments>
</comment>
<comment type="interaction">
    <interactant intactId="EBI-1054848">
        <id>Q9P0S3</id>
    </interactant>
    <interactant intactId="EBI-739832">
        <id>Q8TBB1</id>
        <label>LNX1</label>
    </interactant>
    <organismsDiffer>false</organismsDiffer>
    <experiments>3</experiments>
</comment>
<comment type="interaction">
    <interactant intactId="EBI-1054848">
        <id>Q9P0S3</id>
    </interactant>
    <interactant intactId="EBI-373355">
        <id>Q5SR56</id>
        <label>MFSD14B</label>
    </interactant>
    <organismsDiffer>false</organismsDiffer>
    <experiments>3</experiments>
</comment>
<comment type="interaction">
    <interactant intactId="EBI-1054848">
        <id>Q9P0S3</id>
    </interactant>
    <interactant intactId="EBI-17616589">
        <id>A6NKB5-5</id>
        <label>PCNX2</label>
    </interactant>
    <organismsDiffer>false</organismsDiffer>
    <experiments>3</experiments>
</comment>
<comment type="interaction">
    <interactant intactId="EBI-1054848">
        <id>Q9P0S3</id>
    </interactant>
    <interactant intactId="EBI-1050125">
        <id>O15173</id>
        <label>PGRMC2</label>
    </interactant>
    <organismsDiffer>false</organismsDiffer>
    <experiments>3</experiments>
</comment>
<comment type="interaction">
    <interactant intactId="EBI-1054848">
        <id>Q9P0S3</id>
    </interactant>
    <interactant intactId="EBI-7545592">
        <id>Q9H6H4</id>
        <label>REEP4</label>
    </interactant>
    <organismsDiffer>false</organismsDiffer>
    <experiments>3</experiments>
</comment>
<comment type="interaction">
    <interactant intactId="EBI-1054848">
        <id>Q9P0S3</id>
    </interactant>
    <interactant intactId="EBI-348482">
        <id>Q99942</id>
        <label>RNF5</label>
    </interactant>
    <organismsDiffer>false</organismsDiffer>
    <experiments>3</experiments>
</comment>
<comment type="interaction">
    <interactant intactId="EBI-1054848">
        <id>Q9P0S3</id>
    </interactant>
    <interactant intactId="EBI-3920694">
        <id>Q9NR31</id>
        <label>SAR1A</label>
    </interactant>
    <organismsDiffer>false</organismsDiffer>
    <experiments>3</experiments>
</comment>
<comment type="interaction">
    <interactant intactId="EBI-1054848">
        <id>Q9P0S3</id>
    </interactant>
    <interactant intactId="EBI-17247926">
        <id>Q9NY72</id>
        <label>SCN3B</label>
    </interactant>
    <organismsDiffer>false</organismsDiffer>
    <experiments>3</experiments>
</comment>
<comment type="interaction">
    <interactant intactId="EBI-1054848">
        <id>Q9P0S3</id>
    </interactant>
    <interactant intactId="EBI-3923031">
        <id>Q14973</id>
        <label>SLC10A1</label>
    </interactant>
    <organismsDiffer>false</organismsDiffer>
    <experiments>3</experiments>
</comment>
<comment type="interaction">
    <interactant intactId="EBI-1054848">
        <id>Q9P0S3</id>
    </interactant>
    <interactant intactId="EBI-18159983">
        <id>Q3KNW5</id>
        <label>SLC10A6</label>
    </interactant>
    <organismsDiffer>false</organismsDiffer>
    <experiments>3</experiments>
</comment>
<comment type="interaction">
    <interactant intactId="EBI-1054848">
        <id>Q9P0S3</id>
    </interactant>
    <interactant intactId="EBI-17595455">
        <id>P54219-3</id>
        <label>SLC18A1</label>
    </interactant>
    <organismsDiffer>false</organismsDiffer>
    <experiments>3</experiments>
</comment>
<comment type="interaction">
    <interactant intactId="EBI-1054848">
        <id>Q9P0S3</id>
    </interactant>
    <interactant intactId="EBI-10262251">
        <id>Q8IWU4</id>
        <label>SLC30A8</label>
    </interactant>
    <organismsDiffer>false</organismsDiffer>
    <experiments>3</experiments>
</comment>
<comment type="interaction">
    <interactant intactId="EBI-1054848">
        <id>Q9P0S3</id>
    </interactant>
    <interactant intactId="EBI-17295964">
        <id>Q9NQQ7-3</id>
        <label>SLC35C2</label>
    </interactant>
    <organismsDiffer>false</organismsDiffer>
    <experiments>3</experiments>
</comment>
<comment type="interaction">
    <interactant intactId="EBI-1054848">
        <id>Q9P0S3</id>
    </interactant>
    <interactant intactId="EBI-1211440">
        <id>P27105</id>
        <label>STOM</label>
    </interactant>
    <organismsDiffer>false</organismsDiffer>
    <experiments>3</experiments>
</comment>
<comment type="interaction">
    <interactant intactId="EBI-1054848">
        <id>Q9P0S3</id>
    </interactant>
    <interactant intactId="EBI-12947623">
        <id>Q96MV1</id>
        <label>TLCD4</label>
    </interactant>
    <organismsDiffer>false</organismsDiffer>
    <experiments>3</experiments>
</comment>
<comment type="interaction">
    <interactant intactId="EBI-1054848">
        <id>Q9P0S3</id>
    </interactant>
    <interactant intactId="EBI-13342951">
        <id>Q96AN5</id>
        <label>TMEM143</label>
    </interactant>
    <organismsDiffer>false</organismsDiffer>
    <experiments>3</experiments>
</comment>
<comment type="interaction">
    <interactant intactId="EBI-1054848">
        <id>Q9P0S3</id>
    </interactant>
    <interactant intactId="EBI-8638294">
        <id>Q9NUH8</id>
        <label>TMEM14B</label>
    </interactant>
    <organismsDiffer>false</organismsDiffer>
    <experiments>3</experiments>
</comment>
<comment type="interaction">
    <interactant intactId="EBI-1054848">
        <id>Q9P0S3</id>
    </interactant>
    <interactant intactId="EBI-11722971">
        <id>Q53FP2</id>
        <label>TMEM35A</label>
    </interactant>
    <organismsDiffer>false</organismsDiffer>
    <experiments>3</experiments>
</comment>
<comment type="interaction">
    <interactant intactId="EBI-1054848">
        <id>Q9P0S3</id>
    </interactant>
    <interactant intactId="EBI-18178701">
        <id>Q4KMG9</id>
        <label>TMEM52B</label>
    </interactant>
    <organismsDiffer>false</organismsDiffer>
    <experiments>3</experiments>
</comment>
<comment type="interaction">
    <interactant intactId="EBI-1054848">
        <id>Q9P0S3</id>
    </interactant>
    <interactant intactId="EBI-1055364">
        <id>Q3ZAQ7</id>
        <label>VMA21</label>
    </interactant>
    <organismsDiffer>false</organismsDiffer>
    <experiments>3</experiments>
</comment>
<comment type="interaction">
    <interactant intactId="EBI-1054848">
        <id>Q9P0S3</id>
    </interactant>
    <interactant intactId="EBI-12837904">
        <id>Q96MV8</id>
        <label>ZDHHC15</label>
    </interactant>
    <organismsDiffer>false</organismsDiffer>
    <experiments>3</experiments>
</comment>
<comment type="interaction">
    <interactant intactId="EBI-1054848">
        <id>Q9P0S3</id>
    </interactant>
    <interactant intactId="EBI-3892947">
        <id>Q5T4F4</id>
        <label>ZFYVE27</label>
    </interactant>
    <organismsDiffer>false</organismsDiffer>
    <experiments>3</experiments>
</comment>
<comment type="subcellular location">
    <subcellularLocation>
        <location evidence="3">Endoplasmic reticulum membrane</location>
        <topology evidence="3">Multi-pass membrane protein</topology>
    </subcellularLocation>
</comment>
<comment type="tissue specificity">
    <text evidence="3">Widely expressed. Expressed in adult and fetal heart, brain, lung, liver, skeletal muscle and kidney. Expressed in adult pancreas and placenta and in fetal spleen abd thymus. Expressed at intermediate level in pancreas, placenta and brain but low in skeletal muscle and lung.</text>
</comment>
<comment type="domain">
    <text evidence="1">Ceramides bind to ORMDL3 N-terminus and stabilize it in a conformation that physically restricts the accessibility of the substrates to their binding sites in the serine palmitoyltransferase (SPT) complex, hence inhibiting SPT catalytic activity. In the absence of ceramides, the N-terminus is flexible and permits substrate binding, thus liberating SPT from inhibition.</text>
</comment>
<comment type="similarity">
    <text evidence="5">Belongs to the ORM family.</text>
</comment>